<feature type="chain" id="PRO_0000185976" description="Glutathione S-transferase GST-4.5">
    <location>
        <begin position="1"/>
        <end position="204"/>
    </location>
</feature>
<feature type="domain" description="GST N-terminal">
    <location>
        <begin position="1"/>
        <end position="77"/>
    </location>
</feature>
<feature type="domain" description="GST C-terminal">
    <location>
        <begin position="83"/>
        <end position="204"/>
    </location>
</feature>
<feature type="binding site" evidence="1">
    <location>
        <position position="10"/>
    </location>
    <ligand>
        <name>glutathione</name>
        <dbReference type="ChEBI" id="CHEBI:57925"/>
    </ligand>
</feature>
<feature type="binding site" evidence="1">
    <location>
        <position position="49"/>
    </location>
    <ligand>
        <name>glutathione</name>
        <dbReference type="ChEBI" id="CHEBI:57925"/>
    </ligand>
</feature>
<feature type="binding site" evidence="1">
    <location>
        <begin position="61"/>
        <end position="62"/>
    </location>
    <ligand>
        <name>glutathione</name>
        <dbReference type="ChEBI" id="CHEBI:57925"/>
    </ligand>
</feature>
<feature type="binding site" evidence="1">
    <location>
        <position position="102"/>
    </location>
    <ligand>
        <name>glutathione</name>
        <dbReference type="ChEBI" id="CHEBI:57925"/>
    </ligand>
</feature>
<feature type="sequence conflict" description="In Ref. 2; AA sequence." evidence="2" ref="2">
    <original>C</original>
    <variation>G</variation>
    <location>
        <position position="22"/>
    </location>
</feature>
<feature type="sequence conflict" description="In Ref. 2; AA sequence." evidence="2" ref="2">
    <original>E</original>
    <variation>D</variation>
    <location>
        <position position="26"/>
    </location>
</feature>
<name>GST_XANCP</name>
<reference key="1">
    <citation type="journal article" date="2002" name="Nature">
        <title>Comparison of the genomes of two Xanthomonas pathogens with differing host specificities.</title>
        <authorList>
            <person name="da Silva A.C.R."/>
            <person name="Ferro J.A."/>
            <person name="Reinach F.C."/>
            <person name="Farah C.S."/>
            <person name="Furlan L.R."/>
            <person name="Quaggio R.B."/>
            <person name="Monteiro-Vitorello C.B."/>
            <person name="Van Sluys M.A."/>
            <person name="Almeida N.F. Jr."/>
            <person name="Alves L.M.C."/>
            <person name="do Amaral A.M."/>
            <person name="Bertolini M.C."/>
            <person name="Camargo L.E.A."/>
            <person name="Camarotte G."/>
            <person name="Cannavan F."/>
            <person name="Cardozo J."/>
            <person name="Chambergo F."/>
            <person name="Ciapina L.P."/>
            <person name="Cicarelli R.M.B."/>
            <person name="Coutinho L.L."/>
            <person name="Cursino-Santos J.R."/>
            <person name="El-Dorry H."/>
            <person name="Faria J.B."/>
            <person name="Ferreira A.J.S."/>
            <person name="Ferreira R.C.C."/>
            <person name="Ferro M.I.T."/>
            <person name="Formighieri E.F."/>
            <person name="Franco M.C."/>
            <person name="Greggio C.C."/>
            <person name="Gruber A."/>
            <person name="Katsuyama A.M."/>
            <person name="Kishi L.T."/>
            <person name="Leite R.P."/>
            <person name="Lemos E.G.M."/>
            <person name="Lemos M.V.F."/>
            <person name="Locali E.C."/>
            <person name="Machado M.A."/>
            <person name="Madeira A.M.B.N."/>
            <person name="Martinez-Rossi N.M."/>
            <person name="Martins E.C."/>
            <person name="Meidanis J."/>
            <person name="Menck C.F.M."/>
            <person name="Miyaki C.Y."/>
            <person name="Moon D.H."/>
            <person name="Moreira L.M."/>
            <person name="Novo M.T.M."/>
            <person name="Okura V.K."/>
            <person name="Oliveira M.C."/>
            <person name="Oliveira V.R."/>
            <person name="Pereira H.A."/>
            <person name="Rossi A."/>
            <person name="Sena J.A.D."/>
            <person name="Silva C."/>
            <person name="de Souza R.F."/>
            <person name="Spinola L.A.F."/>
            <person name="Takita M.A."/>
            <person name="Tamura R.E."/>
            <person name="Teixeira E.C."/>
            <person name="Tezza R.I.D."/>
            <person name="Trindade dos Santos M."/>
            <person name="Truffi D."/>
            <person name="Tsai S.M."/>
            <person name="White F.F."/>
            <person name="Setubal J.C."/>
            <person name="Kitajima J.P."/>
        </authorList>
    </citation>
    <scope>NUCLEOTIDE SEQUENCE [LARGE SCALE GENOMIC DNA]</scope>
    <source>
        <strain>ATCC 33913 / DSM 3586 / NCPPB 528 / LMG 568 / P 25</strain>
    </source>
</reference>
<reference key="2">
    <citation type="journal article" date="1993" name="Arch. Biochem. Biophys.">
        <title>Characterization of glutathione transferase from Xanthomonas campestris.</title>
        <authorList>
            <person name="di Ilio C."/>
            <person name="Aceto A."/>
            <person name="Allocati N."/>
            <person name="Piccolomini R."/>
            <person name="Bucciarelli T."/>
            <person name="Dragani B."/>
            <person name="Faraone A."/>
            <person name="Sacchetta P."/>
            <person name="Petruzzelli R."/>
            <person name="Federici G."/>
        </authorList>
    </citation>
    <scope>PROTEIN SEQUENCE OF 1-32</scope>
</reference>
<organism>
    <name type="scientific">Xanthomonas campestris pv. campestris (strain ATCC 33913 / DSM 3586 / NCPPB 528 / LMG 568 / P 25)</name>
    <dbReference type="NCBI Taxonomy" id="190485"/>
    <lineage>
        <taxon>Bacteria</taxon>
        <taxon>Pseudomonadati</taxon>
        <taxon>Pseudomonadota</taxon>
        <taxon>Gammaproteobacteria</taxon>
        <taxon>Lysobacterales</taxon>
        <taxon>Lysobacteraceae</taxon>
        <taxon>Xanthomonas</taxon>
    </lineage>
</organism>
<accession>P45875</accession>
<dbReference type="EC" id="2.5.1.18"/>
<dbReference type="EMBL" id="AE008922">
    <property type="protein sequence ID" value="AAM40239.1"/>
    <property type="molecule type" value="Genomic_DNA"/>
</dbReference>
<dbReference type="PIR" id="S35583">
    <property type="entry name" value="S35583"/>
</dbReference>
<dbReference type="RefSeq" id="NP_636315.1">
    <property type="nucleotide sequence ID" value="NC_003902.1"/>
</dbReference>
<dbReference type="RefSeq" id="WP_011036143.1">
    <property type="nucleotide sequence ID" value="NC_003902.1"/>
</dbReference>
<dbReference type="SMR" id="P45875"/>
<dbReference type="STRING" id="190485.XCC0929"/>
<dbReference type="EnsemblBacteria" id="AAM40239">
    <property type="protein sequence ID" value="AAM40239"/>
    <property type="gene ID" value="XCC0929"/>
</dbReference>
<dbReference type="KEGG" id="xcc:XCC0929"/>
<dbReference type="PATRIC" id="fig|190485.4.peg.1001"/>
<dbReference type="eggNOG" id="COG0625">
    <property type="taxonomic scope" value="Bacteria"/>
</dbReference>
<dbReference type="HOGENOM" id="CLU_011226_6_1_6"/>
<dbReference type="OrthoDB" id="8772754at2"/>
<dbReference type="Proteomes" id="UP000001010">
    <property type="component" value="Chromosome"/>
</dbReference>
<dbReference type="GO" id="GO:0005737">
    <property type="term" value="C:cytoplasm"/>
    <property type="evidence" value="ECO:0000318"/>
    <property type="project" value="GO_Central"/>
</dbReference>
<dbReference type="GO" id="GO:0004364">
    <property type="term" value="F:glutathione transferase activity"/>
    <property type="evidence" value="ECO:0000318"/>
    <property type="project" value="GO_Central"/>
</dbReference>
<dbReference type="CDD" id="cd03188">
    <property type="entry name" value="GST_C_Beta"/>
    <property type="match status" value="1"/>
</dbReference>
<dbReference type="CDD" id="cd03057">
    <property type="entry name" value="GST_N_Beta"/>
    <property type="match status" value="1"/>
</dbReference>
<dbReference type="Gene3D" id="1.20.1050.10">
    <property type="match status" value="1"/>
</dbReference>
<dbReference type="Gene3D" id="3.40.30.10">
    <property type="entry name" value="Glutaredoxin"/>
    <property type="match status" value="1"/>
</dbReference>
<dbReference type="InterPro" id="IPR010987">
    <property type="entry name" value="Glutathione-S-Trfase_C-like"/>
</dbReference>
<dbReference type="InterPro" id="IPR036282">
    <property type="entry name" value="Glutathione-S-Trfase_C_sf"/>
</dbReference>
<dbReference type="InterPro" id="IPR040079">
    <property type="entry name" value="Glutathione_S-Trfase"/>
</dbReference>
<dbReference type="InterPro" id="IPR004045">
    <property type="entry name" value="Glutathione_S-Trfase_N"/>
</dbReference>
<dbReference type="InterPro" id="IPR004046">
    <property type="entry name" value="GST_C"/>
</dbReference>
<dbReference type="InterPro" id="IPR036249">
    <property type="entry name" value="Thioredoxin-like_sf"/>
</dbReference>
<dbReference type="PANTHER" id="PTHR44051:SF8">
    <property type="entry name" value="GLUTATHIONE S-TRANSFERASE GSTA"/>
    <property type="match status" value="1"/>
</dbReference>
<dbReference type="PANTHER" id="PTHR44051">
    <property type="entry name" value="GLUTATHIONE S-TRANSFERASE-RELATED"/>
    <property type="match status" value="1"/>
</dbReference>
<dbReference type="Pfam" id="PF00043">
    <property type="entry name" value="GST_C"/>
    <property type="match status" value="1"/>
</dbReference>
<dbReference type="Pfam" id="PF13409">
    <property type="entry name" value="GST_N_2"/>
    <property type="match status" value="1"/>
</dbReference>
<dbReference type="SFLD" id="SFLDS00019">
    <property type="entry name" value="Glutathione_Transferase_(cytos"/>
    <property type="match status" value="1"/>
</dbReference>
<dbReference type="SFLD" id="SFLDG01150">
    <property type="entry name" value="Main.1:_Beta-like"/>
    <property type="match status" value="1"/>
</dbReference>
<dbReference type="SUPFAM" id="SSF47616">
    <property type="entry name" value="GST C-terminal domain-like"/>
    <property type="match status" value="1"/>
</dbReference>
<dbReference type="SUPFAM" id="SSF52833">
    <property type="entry name" value="Thioredoxin-like"/>
    <property type="match status" value="1"/>
</dbReference>
<dbReference type="PROSITE" id="PS50405">
    <property type="entry name" value="GST_CTER"/>
    <property type="match status" value="1"/>
</dbReference>
<dbReference type="PROSITE" id="PS50404">
    <property type="entry name" value="GST_NTER"/>
    <property type="match status" value="1"/>
</dbReference>
<sequence>MKLYTKPGACSLADHIVLRWSCLPFELTVVDAATMKSPDYLRLNPAGAVPLLVVDQWALTQNAAILNYIADTAPLTGLGGDGTARSRAEINRWIAFVNADLHPTFKPLFGSTAYLQEDALIQRSHEDARTKLRTLYTRVDAHLQGRNWLAGDTHTGADAYLFVTLRWAHKAGVDLSGLSALDAFFQRMLADADVQAALQAEGLN</sequence>
<gene>
    <name type="primary">gst</name>
    <name type="ordered locus">XCC0929</name>
</gene>
<proteinExistence type="evidence at protein level"/>
<comment type="function">
    <text>Conjugation of reduced glutathione to a wide number of exogenous and endogenous hydrophobic electrophiles.</text>
</comment>
<comment type="catalytic activity">
    <reaction>
        <text>RX + glutathione = an S-substituted glutathione + a halide anion + H(+)</text>
        <dbReference type="Rhea" id="RHEA:16437"/>
        <dbReference type="ChEBI" id="CHEBI:15378"/>
        <dbReference type="ChEBI" id="CHEBI:16042"/>
        <dbReference type="ChEBI" id="CHEBI:17792"/>
        <dbReference type="ChEBI" id="CHEBI:57925"/>
        <dbReference type="ChEBI" id="CHEBI:90779"/>
        <dbReference type="EC" id="2.5.1.18"/>
    </reaction>
</comment>
<comment type="subunit">
    <text>Homodimer.</text>
</comment>
<comment type="subcellular location">
    <subcellularLocation>
        <location>Cytoplasm</location>
    </subcellularLocation>
</comment>
<comment type="similarity">
    <text evidence="2">Belongs to the GST superfamily.</text>
</comment>
<keyword id="KW-0963">Cytoplasm</keyword>
<keyword id="KW-0903">Direct protein sequencing</keyword>
<keyword id="KW-1185">Reference proteome</keyword>
<keyword id="KW-0808">Transferase</keyword>
<protein>
    <recommendedName>
        <fullName>Glutathione S-transferase GST-4.5</fullName>
        <ecNumber>2.5.1.18</ecNumber>
    </recommendedName>
</protein>
<evidence type="ECO:0000250" key="1"/>
<evidence type="ECO:0000305" key="2"/>